<evidence type="ECO:0000250" key="1">
    <source>
        <dbReference type="UniProtKB" id="P06493"/>
    </source>
</evidence>
<evidence type="ECO:0000250" key="2">
    <source>
        <dbReference type="UniProtKB" id="P11440"/>
    </source>
</evidence>
<evidence type="ECO:0000255" key="3">
    <source>
        <dbReference type="PROSITE-ProRule" id="PRU00159"/>
    </source>
</evidence>
<evidence type="ECO:0000255" key="4">
    <source>
        <dbReference type="PROSITE-ProRule" id="PRU10027"/>
    </source>
</evidence>
<evidence type="ECO:0000269" key="5">
    <source>
    </source>
</evidence>
<evidence type="ECO:0000269" key="6">
    <source>
    </source>
</evidence>
<evidence type="ECO:0000269" key="7">
    <source>
    </source>
</evidence>
<evidence type="ECO:0000269" key="8">
    <source>
    </source>
</evidence>
<evidence type="ECO:0000305" key="9"/>
<reference key="1">
    <citation type="submission" date="1991-07" db="EMBL/GenBank/DDBJ databases">
        <authorList>
            <person name="Kanaoka Y."/>
            <person name="Nojima H."/>
            <person name="Okayama H."/>
        </authorList>
    </citation>
    <scope>NUCLEOTIDE SEQUENCE [MRNA]</scope>
</reference>
<reference key="2">
    <citation type="journal article" date="2004" name="Genome Res.">
        <title>The status, quality, and expansion of the NIH full-length cDNA project: the Mammalian Gene Collection (MGC).</title>
        <authorList>
            <consortium name="The MGC Project Team"/>
        </authorList>
    </citation>
    <scope>NUCLEOTIDE SEQUENCE [LARGE SCALE MRNA]</scope>
    <source>
        <tissue>Thymus</tissue>
    </source>
</reference>
<reference key="3">
    <citation type="journal article" date="1989" name="Cell">
        <title>The cdc2 kinase is a nuclear protein that is essential for mitosis in mammalian cells.</title>
        <authorList>
            <person name="Riabowol K."/>
            <person name="Draetta G."/>
            <person name="Brizuela L."/>
            <person name="Vandre D."/>
            <person name="Beach D."/>
        </authorList>
    </citation>
    <scope>SUBCELLULAR LOCATION</scope>
</reference>
<reference key="4">
    <citation type="journal article" date="1999" name="J. Biol. Chem.">
        <title>Cdc2 and Cdk2 kinase activated by transforming growth factor-beta1 trigger apoptosis through the phosphorylation of retinoblastoma protein in FaO hepatoma cells.</title>
        <authorList>
            <person name="Choi K.S."/>
            <person name="Eom Y.W."/>
            <person name="Kang Y."/>
            <person name="Ha M.J."/>
            <person name="Rhee H."/>
            <person name="Yoon J.-W."/>
            <person name="Kim S.-J."/>
        </authorList>
    </citation>
    <scope>FUNCTION AS RB1 KINASE</scope>
    <scope>INDUCTION BY TGFB1</scope>
    <scope>INTERACTION WITH RB1</scope>
</reference>
<reference key="5">
    <citation type="journal article" date="2007" name="J. Cell Sci.">
        <title>Cdc2-mediated Schwann cell migration during peripheral nerve regeneration.</title>
        <authorList>
            <person name="Han I.S."/>
            <person name="Seo T.B."/>
            <person name="Kim K.-H."/>
            <person name="Yoon J.-H."/>
            <person name="Yoon S.-J."/>
            <person name="Namgung U."/>
        </authorList>
    </citation>
    <scope>FUNCTION AS CALD1 KINASE</scope>
</reference>
<reference key="6">
    <citation type="journal article" date="2009" name="Hepatology">
        <title>Cyclin-dependent kinase 1 plays a critical role in DNA replication control during rat liver regeneration.</title>
        <authorList>
            <person name="Garnier D."/>
            <person name="Loyer P."/>
            <person name="Ribault C."/>
            <person name="Guguen-Guillouzo C."/>
            <person name="Corlu A."/>
        </authorList>
    </citation>
    <scope>FUNCTION</scope>
    <scope>INTERACTION WITH CYCLIN-A AND B1</scope>
    <scope>INDUCTION BY MITOGEN AGENT</scope>
    <scope>SUBCELLULAR LOCATION</scope>
</reference>
<protein>
    <recommendedName>
        <fullName>Cyclin-dependent kinase 1</fullName>
        <shortName>CDK1</shortName>
        <ecNumber evidence="1">2.7.11.22</ecNumber>
        <ecNumber evidence="2">2.7.11.23</ecNumber>
    </recommendedName>
    <alternativeName>
        <fullName>Cell division control protein 2 homolog</fullName>
    </alternativeName>
    <alternativeName>
        <fullName>Cell division protein kinase 1</fullName>
    </alternativeName>
    <alternativeName>
        <fullName>p34 protein kinase</fullName>
    </alternativeName>
</protein>
<gene>
    <name type="primary">Cdk1</name>
    <name type="synonym">Cdc2</name>
    <name type="synonym">Cdc2a</name>
    <name type="synonym">Cdkn1</name>
</gene>
<proteinExistence type="evidence at protein level"/>
<organism>
    <name type="scientific">Rattus norvegicus</name>
    <name type="common">Rat</name>
    <dbReference type="NCBI Taxonomy" id="10116"/>
    <lineage>
        <taxon>Eukaryota</taxon>
        <taxon>Metazoa</taxon>
        <taxon>Chordata</taxon>
        <taxon>Craniata</taxon>
        <taxon>Vertebrata</taxon>
        <taxon>Euteleostomi</taxon>
        <taxon>Mammalia</taxon>
        <taxon>Eutheria</taxon>
        <taxon>Euarchontoglires</taxon>
        <taxon>Glires</taxon>
        <taxon>Rodentia</taxon>
        <taxon>Myomorpha</taxon>
        <taxon>Muroidea</taxon>
        <taxon>Muridae</taxon>
        <taxon>Murinae</taxon>
        <taxon>Rattus</taxon>
    </lineage>
</organism>
<sequence length="297" mass="34135">MEDYIKIEKIGEGTYGVVYKGRHRTTGQIVAMKKIRLESEEEGVPSTAIREISLLKELRHPNIVSLQDVLMQDSRLYLIFEFLSMDLKKYLDSIPPGQFMDSSLVKSYLYQILQGIVFCHSRRVLHRDLKPQNLLIDDKGTIKLADFGLARAFGIPIRVYTHEVVTLWYRSPEVLLGSARYSTPVDIWSIGTIFAELATKKPLFHGDSEIDQLFRIFRALGTPNNEVWPEVESLQDYKNTFPKWKPGSLASHVKNLDENGLDLLSKMLVYDPAKRISGKMALKHPYFDDLDNQIKKM</sequence>
<keyword id="KW-0007">Acetylation</keyword>
<keyword id="KW-0053">Apoptosis</keyword>
<keyword id="KW-0067">ATP-binding</keyword>
<keyword id="KW-0090">Biological rhythms</keyword>
<keyword id="KW-0131">Cell cycle</keyword>
<keyword id="KW-0132">Cell division</keyword>
<keyword id="KW-0963">Cytoplasm</keyword>
<keyword id="KW-0206">Cytoskeleton</keyword>
<keyword id="KW-1017">Isopeptide bond</keyword>
<keyword id="KW-0418">Kinase</keyword>
<keyword id="KW-0496">Mitochondrion</keyword>
<keyword id="KW-0498">Mitosis</keyword>
<keyword id="KW-0547">Nucleotide-binding</keyword>
<keyword id="KW-0539">Nucleus</keyword>
<keyword id="KW-0597">Phosphoprotein</keyword>
<keyword id="KW-1185">Reference proteome</keyword>
<keyword id="KW-0723">Serine/threonine-protein kinase</keyword>
<keyword id="KW-0808">Transferase</keyword>
<keyword id="KW-0832">Ubl conjugation</keyword>
<dbReference type="EC" id="2.7.11.22" evidence="1"/>
<dbReference type="EC" id="2.7.11.23" evidence="2"/>
<dbReference type="EMBL" id="X60767">
    <property type="protein sequence ID" value="CAA43177.1"/>
    <property type="molecule type" value="mRNA"/>
</dbReference>
<dbReference type="EMBL" id="BC091549">
    <property type="protein sequence ID" value="AAH91549.1"/>
    <property type="molecule type" value="mRNA"/>
</dbReference>
<dbReference type="PIR" id="S24913">
    <property type="entry name" value="S24913"/>
</dbReference>
<dbReference type="RefSeq" id="NP_062169.1">
    <property type="nucleotide sequence ID" value="NM_019296.2"/>
</dbReference>
<dbReference type="RefSeq" id="XP_006256415.1">
    <property type="nucleotide sequence ID" value="XM_006256353.5"/>
</dbReference>
<dbReference type="RefSeq" id="XP_063135552.1">
    <property type="nucleotide sequence ID" value="XM_063279482.1"/>
</dbReference>
<dbReference type="SMR" id="P39951"/>
<dbReference type="BioGRID" id="248460">
    <property type="interactions" value="3"/>
</dbReference>
<dbReference type="ComplexPortal" id="CPX-2063">
    <property type="entry name" value="Cyclin A1-CDK1 complex"/>
</dbReference>
<dbReference type="ComplexPortal" id="CPX-2064">
    <property type="entry name" value="Cyclin A2-CDK1 complex"/>
</dbReference>
<dbReference type="ComplexPortal" id="CPX-2072">
    <property type="entry name" value="Cyclin B1-CDK1 complex"/>
</dbReference>
<dbReference type="CORUM" id="P39951"/>
<dbReference type="FunCoup" id="P39951">
    <property type="interactions" value="1950"/>
</dbReference>
<dbReference type="IntAct" id="P39951">
    <property type="interactions" value="2"/>
</dbReference>
<dbReference type="STRING" id="10116.ENSRNOP00000070138"/>
<dbReference type="iPTMnet" id="P39951"/>
<dbReference type="PhosphoSitePlus" id="P39951"/>
<dbReference type="jPOST" id="P39951"/>
<dbReference type="PaxDb" id="10116-ENSRNOP00000000783"/>
<dbReference type="Ensembl" id="ENSRNOT00000086806.2">
    <property type="protein sequence ID" value="ENSRNOP00000072365.1"/>
    <property type="gene ID" value="ENSRNOG00000000632.7"/>
</dbReference>
<dbReference type="GeneID" id="54237"/>
<dbReference type="KEGG" id="rno:54237"/>
<dbReference type="UCSC" id="RGD:2319">
    <property type="organism name" value="rat"/>
</dbReference>
<dbReference type="AGR" id="RGD:2319"/>
<dbReference type="CTD" id="983"/>
<dbReference type="RGD" id="2319">
    <property type="gene designation" value="Cdk1"/>
</dbReference>
<dbReference type="eggNOG" id="KOG0594">
    <property type="taxonomic scope" value="Eukaryota"/>
</dbReference>
<dbReference type="GeneTree" id="ENSGT00940000153335"/>
<dbReference type="HOGENOM" id="CLU_000288_181_1_1"/>
<dbReference type="InParanoid" id="P39951"/>
<dbReference type="OMA" id="YLYQITR"/>
<dbReference type="OrthoDB" id="1732493at2759"/>
<dbReference type="PhylomeDB" id="P39951"/>
<dbReference type="TreeFam" id="TF101021"/>
<dbReference type="BRENDA" id="2.7.11.22">
    <property type="organism ID" value="5301"/>
</dbReference>
<dbReference type="Reactome" id="R-RNO-110056">
    <property type="pathway name" value="MAPK3 (ERK1) activation"/>
</dbReference>
<dbReference type="Reactome" id="R-RNO-174048">
    <property type="pathway name" value="APC/C:Cdc20 mediated degradation of Cyclin B"/>
</dbReference>
<dbReference type="Reactome" id="R-RNO-174184">
    <property type="pathway name" value="Cdc20:Phospho-APC/C mediated degradation of Cyclin A"/>
</dbReference>
<dbReference type="Reactome" id="R-RNO-176408">
    <property type="pathway name" value="Regulation of APC/C activators between G1/S and early anaphase"/>
</dbReference>
<dbReference type="Reactome" id="R-RNO-176412">
    <property type="pathway name" value="Phosphorylation of the APC/C"/>
</dbReference>
<dbReference type="Reactome" id="R-RNO-176417">
    <property type="pathway name" value="Phosphorylation of Emi1"/>
</dbReference>
<dbReference type="Reactome" id="R-RNO-2299718">
    <property type="pathway name" value="Condensation of Prophase Chromosomes"/>
</dbReference>
<dbReference type="Reactome" id="R-RNO-2500257">
    <property type="pathway name" value="Resolution of Sister Chromatid Cohesion"/>
</dbReference>
<dbReference type="Reactome" id="R-RNO-2565942">
    <property type="pathway name" value="Regulation of PLK1 Activity at G2/M Transition"/>
</dbReference>
<dbReference type="Reactome" id="R-RNO-2980767">
    <property type="pathway name" value="Activation of NIMA Kinases NEK9, NEK6, NEK7"/>
</dbReference>
<dbReference type="Reactome" id="R-RNO-2995383">
    <property type="pathway name" value="Initiation of Nuclear Envelope (NE) Reformation"/>
</dbReference>
<dbReference type="Reactome" id="R-RNO-3301854">
    <property type="pathway name" value="Nuclear Pore Complex (NPC) Disassembly"/>
</dbReference>
<dbReference type="Reactome" id="R-RNO-380259">
    <property type="pathway name" value="Loss of Nlp from mitotic centrosomes"/>
</dbReference>
<dbReference type="Reactome" id="R-RNO-380270">
    <property type="pathway name" value="Recruitment of mitotic centrosome proteins and complexes"/>
</dbReference>
<dbReference type="Reactome" id="R-RNO-380284">
    <property type="pathway name" value="Loss of proteins required for interphase microtubule organization from the centrosome"/>
</dbReference>
<dbReference type="Reactome" id="R-RNO-380320">
    <property type="pathway name" value="Recruitment of NuMA to mitotic centrosomes"/>
</dbReference>
<dbReference type="Reactome" id="R-RNO-4419969">
    <property type="pathway name" value="Depolymerization of the Nuclear Lamina"/>
</dbReference>
<dbReference type="Reactome" id="R-RNO-5620912">
    <property type="pathway name" value="Anchoring of the basal body to the plasma membrane"/>
</dbReference>
<dbReference type="Reactome" id="R-RNO-5687128">
    <property type="pathway name" value="MAPK6/MAPK4 signaling"/>
</dbReference>
<dbReference type="Reactome" id="R-RNO-5689896">
    <property type="pathway name" value="Ovarian tumor domain proteases"/>
</dbReference>
<dbReference type="Reactome" id="R-RNO-6804114">
    <property type="pathway name" value="TP53 Regulates Transcription of Genes Involved in G2 Cell Cycle Arrest"/>
</dbReference>
<dbReference type="Reactome" id="R-RNO-6804757">
    <property type="pathway name" value="Regulation of TP53 Degradation"/>
</dbReference>
<dbReference type="Reactome" id="R-RNO-68875">
    <property type="pathway name" value="Mitotic Prophase"/>
</dbReference>
<dbReference type="Reactome" id="R-RNO-69273">
    <property type="pathway name" value="Cyclin A/B1/B2 associated events during G2/M transition"/>
</dbReference>
<dbReference type="Reactome" id="R-RNO-69478">
    <property type="pathway name" value="G2/M DNA replication checkpoint"/>
</dbReference>
<dbReference type="Reactome" id="R-RNO-75035">
    <property type="pathway name" value="Chk1/Chk2(Cds1) mediated inactivation of Cyclin B:Cdk1 complex"/>
</dbReference>
<dbReference type="Reactome" id="R-RNO-8852276">
    <property type="pathway name" value="The role of GTSE1 in G2/M progression after G2 checkpoint"/>
</dbReference>
<dbReference type="Reactome" id="R-RNO-8854518">
    <property type="pathway name" value="AURKA Activation by TPX2"/>
</dbReference>
<dbReference type="Reactome" id="R-RNO-9833482">
    <property type="pathway name" value="PKR-mediated signaling"/>
</dbReference>
<dbReference type="PRO" id="PR:P39951"/>
<dbReference type="Proteomes" id="UP000002494">
    <property type="component" value="Chromosome 20"/>
</dbReference>
<dbReference type="Bgee" id="ENSRNOG00000000632">
    <property type="expression patterns" value="Expressed in thymus and 17 other cell types or tissues"/>
</dbReference>
<dbReference type="GO" id="GO:0005813">
    <property type="term" value="C:centrosome"/>
    <property type="evidence" value="ECO:0000250"/>
    <property type="project" value="UniProtKB"/>
</dbReference>
<dbReference type="GO" id="GO:0097122">
    <property type="term" value="C:cyclin A2-CDK1 complex"/>
    <property type="evidence" value="ECO:0000266"/>
    <property type="project" value="RGD"/>
</dbReference>
<dbReference type="GO" id="GO:0097125">
    <property type="term" value="C:cyclin B1-CDK1 complex"/>
    <property type="evidence" value="ECO:0000266"/>
    <property type="project" value="RGD"/>
</dbReference>
<dbReference type="GO" id="GO:0000307">
    <property type="term" value="C:cyclin-dependent protein kinase holoenzyme complex"/>
    <property type="evidence" value="ECO:0000266"/>
    <property type="project" value="RGD"/>
</dbReference>
<dbReference type="GO" id="GO:0005737">
    <property type="term" value="C:cytoplasm"/>
    <property type="evidence" value="ECO:0000266"/>
    <property type="project" value="RGD"/>
</dbReference>
<dbReference type="GO" id="GO:0005829">
    <property type="term" value="C:cytosol"/>
    <property type="evidence" value="ECO:0000314"/>
    <property type="project" value="RGD"/>
</dbReference>
<dbReference type="GO" id="GO:0070971">
    <property type="term" value="C:endoplasmic reticulum exit site"/>
    <property type="evidence" value="ECO:0000266"/>
    <property type="project" value="RGD"/>
</dbReference>
<dbReference type="GO" id="GO:0042585">
    <property type="term" value="C:germinal vesicle"/>
    <property type="evidence" value="ECO:0000266"/>
    <property type="project" value="RGD"/>
</dbReference>
<dbReference type="GO" id="GO:0030496">
    <property type="term" value="C:midbody"/>
    <property type="evidence" value="ECO:0000266"/>
    <property type="project" value="RGD"/>
</dbReference>
<dbReference type="GO" id="GO:0005759">
    <property type="term" value="C:mitochondrial matrix"/>
    <property type="evidence" value="ECO:0000266"/>
    <property type="project" value="RGD"/>
</dbReference>
<dbReference type="GO" id="GO:0072686">
    <property type="term" value="C:mitotic spindle"/>
    <property type="evidence" value="ECO:0000250"/>
    <property type="project" value="UniProtKB"/>
</dbReference>
<dbReference type="GO" id="GO:0005634">
    <property type="term" value="C:nucleus"/>
    <property type="evidence" value="ECO:0000266"/>
    <property type="project" value="RGD"/>
</dbReference>
<dbReference type="GO" id="GO:0005876">
    <property type="term" value="C:spindle microtubule"/>
    <property type="evidence" value="ECO:0000266"/>
    <property type="project" value="RGD"/>
</dbReference>
<dbReference type="GO" id="GO:0005524">
    <property type="term" value="F:ATP binding"/>
    <property type="evidence" value="ECO:0007669"/>
    <property type="project" value="UniProtKB-KW"/>
</dbReference>
<dbReference type="GO" id="GO:0003682">
    <property type="term" value="F:chromatin binding"/>
    <property type="evidence" value="ECO:0000266"/>
    <property type="project" value="RGD"/>
</dbReference>
<dbReference type="GO" id="GO:0030332">
    <property type="term" value="F:cyclin binding"/>
    <property type="evidence" value="ECO:0000266"/>
    <property type="project" value="RGD"/>
</dbReference>
<dbReference type="GO" id="GO:0097472">
    <property type="term" value="F:cyclin-dependent protein kinase activity"/>
    <property type="evidence" value="ECO:0000266"/>
    <property type="project" value="RGD"/>
</dbReference>
<dbReference type="GO" id="GO:0004693">
    <property type="term" value="F:cyclin-dependent protein serine/threonine kinase activity"/>
    <property type="evidence" value="ECO:0000314"/>
    <property type="project" value="UniProtKB"/>
</dbReference>
<dbReference type="GO" id="GO:0035173">
    <property type="term" value="F:histone kinase activity"/>
    <property type="evidence" value="ECO:0000314"/>
    <property type="project" value="RGD"/>
</dbReference>
<dbReference type="GO" id="GO:0030544">
    <property type="term" value="F:Hsp70 protein binding"/>
    <property type="evidence" value="ECO:0000266"/>
    <property type="project" value="RGD"/>
</dbReference>
<dbReference type="GO" id="GO:0016301">
    <property type="term" value="F:kinase activity"/>
    <property type="evidence" value="ECO:0000266"/>
    <property type="project" value="RGD"/>
</dbReference>
<dbReference type="GO" id="GO:0004672">
    <property type="term" value="F:protein kinase activity"/>
    <property type="evidence" value="ECO:0000266"/>
    <property type="project" value="RGD"/>
</dbReference>
<dbReference type="GO" id="GO:0106310">
    <property type="term" value="F:protein serine kinase activity"/>
    <property type="evidence" value="ECO:0007669"/>
    <property type="project" value="RHEA"/>
</dbReference>
<dbReference type="GO" id="GO:0004674">
    <property type="term" value="F:protein serine/threonine kinase activity"/>
    <property type="evidence" value="ECO:0000250"/>
    <property type="project" value="ParkinsonsUK-UCL"/>
</dbReference>
<dbReference type="GO" id="GO:0008353">
    <property type="term" value="F:RNA polymerase II CTD heptapeptide repeat kinase activity"/>
    <property type="evidence" value="ECO:0000266"/>
    <property type="project" value="RGD"/>
</dbReference>
<dbReference type="GO" id="GO:0006915">
    <property type="term" value="P:apoptotic process"/>
    <property type="evidence" value="ECO:0007669"/>
    <property type="project" value="UniProtKB-KW"/>
</dbReference>
<dbReference type="GO" id="GO:0051301">
    <property type="term" value="P:cell division"/>
    <property type="evidence" value="ECO:0007669"/>
    <property type="project" value="UniProtKB-KW"/>
</dbReference>
<dbReference type="GO" id="GO:0070301">
    <property type="term" value="P:cellular response to hydrogen peroxide"/>
    <property type="evidence" value="ECO:0000270"/>
    <property type="project" value="RGD"/>
</dbReference>
<dbReference type="GO" id="GO:0030261">
    <property type="term" value="P:chromosome condensation"/>
    <property type="evidence" value="ECO:0000315"/>
    <property type="project" value="RGD"/>
</dbReference>
<dbReference type="GO" id="GO:0006974">
    <property type="term" value="P:DNA damage response"/>
    <property type="evidence" value="ECO:0000266"/>
    <property type="project" value="RGD"/>
</dbReference>
<dbReference type="GO" id="GO:0030855">
    <property type="term" value="P:epithelial cell differentiation"/>
    <property type="evidence" value="ECO:0000266"/>
    <property type="project" value="RGD"/>
</dbReference>
<dbReference type="GO" id="GO:0048144">
    <property type="term" value="P:fibroblast proliferation"/>
    <property type="evidence" value="ECO:0000266"/>
    <property type="project" value="RGD"/>
</dbReference>
<dbReference type="GO" id="GO:0000082">
    <property type="term" value="P:G1/S transition of mitotic cell cycle"/>
    <property type="evidence" value="ECO:0007669"/>
    <property type="project" value="Ensembl"/>
</dbReference>
<dbReference type="GO" id="GO:0000086">
    <property type="term" value="P:G2/M transition of mitotic cell cycle"/>
    <property type="evidence" value="ECO:0000250"/>
    <property type="project" value="UniProtKB"/>
</dbReference>
<dbReference type="GO" id="GO:0090166">
    <property type="term" value="P:Golgi disassembly"/>
    <property type="evidence" value="ECO:0000314"/>
    <property type="project" value="UniProtKB"/>
</dbReference>
<dbReference type="GO" id="GO:1903537">
    <property type="term" value="P:meiotic cell cycle process involved in oocyte maturation"/>
    <property type="evidence" value="ECO:0000266"/>
    <property type="project" value="RGD"/>
</dbReference>
<dbReference type="GO" id="GO:0000212">
    <property type="term" value="P:meiotic spindle organization"/>
    <property type="evidence" value="ECO:0000266"/>
    <property type="project" value="RGD"/>
</dbReference>
<dbReference type="GO" id="GO:1902850">
    <property type="term" value="P:microtubule cytoskeleton organization involved in mitosis"/>
    <property type="evidence" value="ECO:0000266"/>
    <property type="project" value="RGD"/>
</dbReference>
<dbReference type="GO" id="GO:0044772">
    <property type="term" value="P:mitotic cell cycle phase transition"/>
    <property type="evidence" value="ECO:0000266"/>
    <property type="project" value="RGD"/>
</dbReference>
<dbReference type="GO" id="GO:0007095">
    <property type="term" value="P:mitotic G2 DNA damage checkpoint signaling"/>
    <property type="evidence" value="ECO:0000266"/>
    <property type="project" value="RGD"/>
</dbReference>
<dbReference type="GO" id="GO:0007077">
    <property type="term" value="P:mitotic nuclear membrane disassembly"/>
    <property type="evidence" value="ECO:0000266"/>
    <property type="project" value="RGD"/>
</dbReference>
<dbReference type="GO" id="GO:0043066">
    <property type="term" value="P:negative regulation of apoptotic process"/>
    <property type="evidence" value="ECO:0000266"/>
    <property type="project" value="RGD"/>
</dbReference>
<dbReference type="GO" id="GO:0010629">
    <property type="term" value="P:negative regulation of gene expression"/>
    <property type="evidence" value="ECO:0000315"/>
    <property type="project" value="ARUK-UCL"/>
</dbReference>
<dbReference type="GO" id="GO:0018105">
    <property type="term" value="P:peptidyl-serine phosphorylation"/>
    <property type="evidence" value="ECO:0000314"/>
    <property type="project" value="UniProtKB"/>
</dbReference>
<dbReference type="GO" id="GO:0018107">
    <property type="term" value="P:peptidyl-threonine phosphorylation"/>
    <property type="evidence" value="ECO:0000250"/>
    <property type="project" value="UniProtKB"/>
</dbReference>
<dbReference type="GO" id="GO:0060045">
    <property type="term" value="P:positive regulation of cardiac muscle cell proliferation"/>
    <property type="evidence" value="ECO:0000315"/>
    <property type="project" value="RGD"/>
</dbReference>
<dbReference type="GO" id="GO:0045740">
    <property type="term" value="P:positive regulation of DNA replication"/>
    <property type="evidence" value="ECO:0000315"/>
    <property type="project" value="RGD"/>
</dbReference>
<dbReference type="GO" id="GO:0010971">
    <property type="term" value="P:positive regulation of G2/M transition of mitotic cell cycle"/>
    <property type="evidence" value="ECO:0000266"/>
    <property type="project" value="RGD"/>
</dbReference>
<dbReference type="GO" id="GO:0010628">
    <property type="term" value="P:positive regulation of gene expression"/>
    <property type="evidence" value="ECO:0000315"/>
    <property type="project" value="ARUK-UCL"/>
</dbReference>
<dbReference type="GO" id="GO:1904146">
    <property type="term" value="P:positive regulation of meiotic cell cycle process involved in oocyte maturation"/>
    <property type="evidence" value="ECO:0000266"/>
    <property type="project" value="RGD"/>
</dbReference>
<dbReference type="GO" id="GO:1905448">
    <property type="term" value="P:positive regulation of mitochondrial ATP synthesis coupled electron transport"/>
    <property type="evidence" value="ECO:0000266"/>
    <property type="project" value="RGD"/>
</dbReference>
<dbReference type="GO" id="GO:0062033">
    <property type="term" value="P:positive regulation of mitotic sister chromatid segregation"/>
    <property type="evidence" value="ECO:0000266"/>
    <property type="project" value="RGD"/>
</dbReference>
<dbReference type="GO" id="GO:0042307">
    <property type="term" value="P:positive regulation of protein import into nucleus"/>
    <property type="evidence" value="ECO:0000315"/>
    <property type="project" value="RGD"/>
</dbReference>
<dbReference type="GO" id="GO:1900182">
    <property type="term" value="P:positive regulation of protein localization to nucleus"/>
    <property type="evidence" value="ECO:0000266"/>
    <property type="project" value="RGD"/>
</dbReference>
<dbReference type="GO" id="GO:0034501">
    <property type="term" value="P:protein localization to kinetochore"/>
    <property type="evidence" value="ECO:0000250"/>
    <property type="project" value="UniProtKB"/>
</dbReference>
<dbReference type="GO" id="GO:0065003">
    <property type="term" value="P:protein-containing complex assembly"/>
    <property type="evidence" value="ECO:0000314"/>
    <property type="project" value="RGD"/>
</dbReference>
<dbReference type="GO" id="GO:1902423">
    <property type="term" value="P:regulation of attachment of mitotic spindle microtubules to kinetochore"/>
    <property type="evidence" value="ECO:0000250"/>
    <property type="project" value="UniProtKB"/>
</dbReference>
<dbReference type="GO" id="GO:0042752">
    <property type="term" value="P:regulation of circadian rhythm"/>
    <property type="evidence" value="ECO:0000250"/>
    <property type="project" value="UniProtKB"/>
</dbReference>
<dbReference type="GO" id="GO:0014823">
    <property type="term" value="P:response to activity"/>
    <property type="evidence" value="ECO:0000270"/>
    <property type="project" value="RGD"/>
</dbReference>
<dbReference type="GO" id="GO:0014075">
    <property type="term" value="P:response to amine"/>
    <property type="evidence" value="ECO:0000270"/>
    <property type="project" value="RGD"/>
</dbReference>
<dbReference type="GO" id="GO:0048678">
    <property type="term" value="P:response to axon injury"/>
    <property type="evidence" value="ECO:0000270"/>
    <property type="project" value="RGD"/>
</dbReference>
<dbReference type="GO" id="GO:0046686">
    <property type="term" value="P:response to cadmium ion"/>
    <property type="evidence" value="ECO:0000270"/>
    <property type="project" value="RGD"/>
</dbReference>
<dbReference type="GO" id="GO:0046688">
    <property type="term" value="P:response to copper ion"/>
    <property type="evidence" value="ECO:0000270"/>
    <property type="project" value="RGD"/>
</dbReference>
<dbReference type="GO" id="GO:0045471">
    <property type="term" value="P:response to ethanol"/>
    <property type="evidence" value="ECO:0000314"/>
    <property type="project" value="RGD"/>
</dbReference>
<dbReference type="GO" id="GO:0042542">
    <property type="term" value="P:response to hydrogen peroxide"/>
    <property type="evidence" value="ECO:0000270"/>
    <property type="project" value="RGD"/>
</dbReference>
<dbReference type="GO" id="GO:0009636">
    <property type="term" value="P:response to toxic substance"/>
    <property type="evidence" value="ECO:0000270"/>
    <property type="project" value="RGD"/>
</dbReference>
<dbReference type="GO" id="GO:0048511">
    <property type="term" value="P:rhythmic process"/>
    <property type="evidence" value="ECO:0007669"/>
    <property type="project" value="UniProtKB-KW"/>
</dbReference>
<dbReference type="GO" id="GO:0055015">
    <property type="term" value="P:ventricular cardiac muscle cell development"/>
    <property type="evidence" value="ECO:0000270"/>
    <property type="project" value="RGD"/>
</dbReference>
<dbReference type="CDD" id="cd07861">
    <property type="entry name" value="STKc_CDK1_euk"/>
    <property type="match status" value="1"/>
</dbReference>
<dbReference type="FunFam" id="1.10.510.10:FF:000231">
    <property type="entry name" value="Cyclin-dependent kinase 1"/>
    <property type="match status" value="1"/>
</dbReference>
<dbReference type="FunFam" id="3.30.200.20:FF:000027">
    <property type="entry name" value="Putative Cyclin-dependent kinase 1"/>
    <property type="match status" value="1"/>
</dbReference>
<dbReference type="Gene3D" id="3.30.200.20">
    <property type="entry name" value="Phosphorylase Kinase, domain 1"/>
    <property type="match status" value="1"/>
</dbReference>
<dbReference type="Gene3D" id="1.10.510.10">
    <property type="entry name" value="Transferase(Phosphotransferase) domain 1"/>
    <property type="match status" value="1"/>
</dbReference>
<dbReference type="InterPro" id="IPR050108">
    <property type="entry name" value="CDK"/>
</dbReference>
<dbReference type="InterPro" id="IPR011009">
    <property type="entry name" value="Kinase-like_dom_sf"/>
</dbReference>
<dbReference type="InterPro" id="IPR000719">
    <property type="entry name" value="Prot_kinase_dom"/>
</dbReference>
<dbReference type="InterPro" id="IPR017441">
    <property type="entry name" value="Protein_kinase_ATP_BS"/>
</dbReference>
<dbReference type="InterPro" id="IPR008271">
    <property type="entry name" value="Ser/Thr_kinase_AS"/>
</dbReference>
<dbReference type="PANTHER" id="PTHR24056">
    <property type="entry name" value="CELL DIVISION PROTEIN KINASE"/>
    <property type="match status" value="1"/>
</dbReference>
<dbReference type="PANTHER" id="PTHR24056:SF334">
    <property type="entry name" value="CYCLIN-DEPENDENT KINASE 1"/>
    <property type="match status" value="1"/>
</dbReference>
<dbReference type="Pfam" id="PF00069">
    <property type="entry name" value="Pkinase"/>
    <property type="match status" value="1"/>
</dbReference>
<dbReference type="SMART" id="SM00220">
    <property type="entry name" value="S_TKc"/>
    <property type="match status" value="1"/>
</dbReference>
<dbReference type="SUPFAM" id="SSF56112">
    <property type="entry name" value="Protein kinase-like (PK-like)"/>
    <property type="match status" value="1"/>
</dbReference>
<dbReference type="PROSITE" id="PS00107">
    <property type="entry name" value="PROTEIN_KINASE_ATP"/>
    <property type="match status" value="1"/>
</dbReference>
<dbReference type="PROSITE" id="PS50011">
    <property type="entry name" value="PROTEIN_KINASE_DOM"/>
    <property type="match status" value="1"/>
</dbReference>
<dbReference type="PROSITE" id="PS00108">
    <property type="entry name" value="PROTEIN_KINASE_ST"/>
    <property type="match status" value="1"/>
</dbReference>
<name>CDK1_RAT</name>
<feature type="chain" id="PRO_0000085727" description="Cyclin-dependent kinase 1">
    <location>
        <begin position="1"/>
        <end position="297"/>
    </location>
</feature>
<feature type="domain" description="Protein kinase" evidence="3">
    <location>
        <begin position="4"/>
        <end position="287"/>
    </location>
</feature>
<feature type="active site" description="Proton acceptor" evidence="3 4">
    <location>
        <position position="128"/>
    </location>
</feature>
<feature type="binding site" evidence="3">
    <location>
        <begin position="10"/>
        <end position="18"/>
    </location>
    <ligand>
        <name>ATP</name>
        <dbReference type="ChEBI" id="CHEBI:30616"/>
    </ligand>
</feature>
<feature type="binding site" evidence="3">
    <location>
        <position position="33"/>
    </location>
    <ligand>
        <name>ATP</name>
        <dbReference type="ChEBI" id="CHEBI:30616"/>
    </ligand>
</feature>
<feature type="modified residue" description="N-acetylmethionine" evidence="1">
    <location>
        <position position="1"/>
    </location>
</feature>
<feature type="modified residue" description="Phosphotyrosine; by PKR" evidence="1">
    <location>
        <position position="4"/>
    </location>
</feature>
<feature type="modified residue" description="N6-acetyllysine; alternate" evidence="1">
    <location>
        <position position="6"/>
    </location>
</feature>
<feature type="modified residue" description="N6-acetyllysine; alternate" evidence="2">
    <location>
        <position position="9"/>
    </location>
</feature>
<feature type="modified residue" description="Phosphothreonine; by PKMYT1" evidence="1">
    <location>
        <position position="14"/>
    </location>
</feature>
<feature type="modified residue" description="Phosphotyrosine; by PKMYT1, WEE1, WEE2 and PKC/PRKCD" evidence="1">
    <location>
        <position position="15"/>
    </location>
</feature>
<feature type="modified residue" description="Phosphotyrosine; by WEE1 and WEE2" evidence="1">
    <location>
        <position position="15"/>
    </location>
</feature>
<feature type="modified residue" description="Phosphotyrosine" evidence="1">
    <location>
        <position position="19"/>
    </location>
</feature>
<feature type="modified residue" description="Phosphoserine" evidence="1">
    <location>
        <position position="39"/>
    </location>
</feature>
<feature type="modified residue" description="Phosphotyrosine" evidence="1">
    <location>
        <position position="77"/>
    </location>
</feature>
<feature type="modified residue" description="Phosphothreonine" evidence="1">
    <location>
        <position position="141"/>
    </location>
</feature>
<feature type="modified residue" description="Phosphothreonine; by CAK" evidence="1">
    <location>
        <position position="161"/>
    </location>
</feature>
<feature type="modified residue" description="Phosphoserine" evidence="1">
    <location>
        <position position="178"/>
    </location>
</feature>
<feature type="modified residue" description="Phosphothreonine" evidence="1">
    <location>
        <position position="222"/>
    </location>
</feature>
<feature type="modified residue" description="N6-succinyllysine" evidence="2">
    <location>
        <position position="245"/>
    </location>
</feature>
<feature type="modified residue" description="Phosphoserine" evidence="1">
    <location>
        <position position="248"/>
    </location>
</feature>
<feature type="cross-link" description="Glycyl lysine isopeptide (Lys-Gly) (interchain with G-Cter in SUMO2); alternate" evidence="1">
    <location>
        <position position="6"/>
    </location>
</feature>
<feature type="cross-link" description="Glycyl lysine isopeptide (Lys-Gly) (interchain with G-Cter in SUMO2); alternate" evidence="1">
    <location>
        <position position="9"/>
    </location>
</feature>
<feature type="cross-link" description="Glycyl lysine isopeptide (Lys-Gly) (interchain with G-Cter in SUMO2)" evidence="1">
    <location>
        <position position="20"/>
    </location>
</feature>
<feature type="cross-link" description="Glycyl lysine isopeptide (Lys-Gly) (interchain with G-Cter in SUMO2)" evidence="1">
    <location>
        <position position="139"/>
    </location>
</feature>
<accession>P39951</accession>
<accession>Q5BJB4</accession>
<comment type="function">
    <text evidence="1 2 5 6 7">Plays a key role in the control of the eukaryotic cell cycle by modulating the centrosome cycle as well as mitotic onset; promotes G2-M transition via association with multiple interphase cyclins (PubMed:10542199, PubMed:19821535). Phosphorylates PARVA/actopaxin, APC, AMPH, APC, BARD1, Bcl-xL/BCL2L1, BRCA2, CALD1, CASP8, CDC7, CDC20, CDC25A, CDC25C, CC2D1A, CENPA, CSNK2 proteins/CKII, FZR1/CDH1, CDK7, CEBPB, CHAMP1, DMD/dystrophin, EEF1 proteins/EF-1, EZH2, KIF11/EG5, EGFR, FANCG, FOS, GFAP, GOLGA2/GM130, GRASP1, UBE2A/hHR6A, HIST1H1 proteins/histone H1, HMGA1, HIVEP3/KRC, KAT5, LMNA, LMNB, LBR, MKI67, LATS1, MAP1B, MAP4, MARCKS, MCM2, MCM4, MKLP1, MLST8, MYB, NEFH, NFIC, NPC/nuclear pore complex, PITPNM1/NIR2, NPM1, NCL, NUCKS1, NPM1/numatrin, ORC1, PRKAR2A, EEF1E1/p18, EIF3F/p47, p53/TP53, NONO/p54NRB, PAPOLA, PLEC/plectin, RB1, TPPP, UL40/R2, RAB4A, RAP1GAP, RBBP8/CtIP, RCC1, RPS6KB1/S6K1, KHDRBS1/SAM68, ESPL1, SKI, BIRC5/survivin, STIP1, TEX14, beta-tubulins, MAPT/TAU, NEDD1, VIM/vimentin, TK1, FOXO1, RUNX1/AML1, SAMHD1, SIRT2, CGAS, ZAR1 and RUNX2 (PubMed:10542199, PubMed:19821535). CDK1/CDC2-cyclin-B controls pronuclear union in interphase fertilized eggs (By similarity). Essential for early stages of embryonic development (By similarity). During G2 and early mitosis, CDC25A/B/C-mediated dephosphorylation activates CDK1/cyclin complexes which phosphorylate several substrates that trigger at least centrosome separation, Golgi dynamics, nuclear envelope breakdown and chromosome condensation (By similarity). Once chromosomes are condensed and aligned at the metaphase plate, CDK1 activity is switched off by WEE1- and PKMYT1-mediated phosphorylation to allow sister chromatid separation, chromosome decondensation, reformation of the nuclear envelope and cytokinesis (By similarity). Phosphorylates KRT5 during prometaphase and metaphase (By similarity). Inactivated by PKR/EIF2AK2- and WEE1-mediated phosphorylation upon DNA damage to stop cell cycle and genome replication at the G2 checkpoint thus facilitating DNA repair (By similarity). Reactivated after successful DNA repair through WIP1-dependent signaling leading to CDC25A/B/C-mediated dephosphorylation and restoring cell cycle progression (By similarity). Catalyzes lamin (LMNA, LMNB1 and LMNB2) phosphorylation at the onset of mitosis, promoting nuclear envelope breakdown (By similarity). In proliferating cells, CDK1-mediated FOXO1 phosphorylation at the G2-M phase represses FOXO1 interaction with 14-3-3 proteins and thereby promotes FOXO1 nuclear accumulation and transcription factor activity, leading to cell death of postmitotic neurons (By similarity). The phosphorylation of beta-tubulins regulates microtubule dynamics during mitosis (By similarity). NEDD1 phosphorylation promotes PLK1-mediated NEDD1 phosphorylation and subsequent targeting of the gamma-tubulin ring complex (gTuRC) to the centrosome, an important step for spindle formation (By similarity). In addition, CC2D1A phosphorylation regulates CC2D1A spindle pole localization and association with SCC1/RAD21 and centriole cohesion during mitosis (By similarity). The phosphorylation of Bcl-xL/BCL2L1 after prolongated G2 arrest upon DNA damage triggers apoptosis (By similarity). In contrast, CASP8 phosphorylation during mitosis prevents its activation by proteolysis and subsequent apoptosis (By similarity). This phosphorylation occurs in cancer cell lines, as well as in primary breast tissues and lymphocytes (By similarity). EZH2 phosphorylation promotes H3K27me3 maintenance and epigenetic gene silencing (By similarity). CALD1 phosphorylation promotes Schwann cell migration during peripheral nerve regeneration (PubMed:17200138). CDK1-cyclin-B complex phosphorylates NCKAP5L and mediates its dissociation from centrosomes during mitosis (By similarity). Regulates the amplitude of the cyclic expression of the core clock gene BMAL1 by phosphorylating its transcriptional repressor NR1D1, and this phosphorylation is necessary for SCF(FBXW7)-mediated ubiquitination and proteasomal degradation of NR1D1 (By similarity). Phosphorylates EML3 at 'Thr-881' which is essential for its interaction with HAUS augmin-like complex and TUBG1 (By similarity). Phosphorylates CGAS during mitosis, leading to its inhibition, thereby preventing CGAS activation by self DNA during mitosis (By similarity). Phosphorylates SKA3 during mitosis which promotes SKA3 binding to the NDC80 complex and anchoring of the SKA complex to kinetochores, to enable stable attachment of mitotic spindle microtubules to kinetochores (By similarity).</text>
</comment>
<comment type="catalytic activity">
    <reaction evidence="1">
        <text>L-seryl-[protein] + ATP = O-phospho-L-seryl-[protein] + ADP + H(+)</text>
        <dbReference type="Rhea" id="RHEA:17989"/>
        <dbReference type="Rhea" id="RHEA-COMP:9863"/>
        <dbReference type="Rhea" id="RHEA-COMP:11604"/>
        <dbReference type="ChEBI" id="CHEBI:15378"/>
        <dbReference type="ChEBI" id="CHEBI:29999"/>
        <dbReference type="ChEBI" id="CHEBI:30616"/>
        <dbReference type="ChEBI" id="CHEBI:83421"/>
        <dbReference type="ChEBI" id="CHEBI:456216"/>
        <dbReference type="EC" id="2.7.11.22"/>
    </reaction>
</comment>
<comment type="catalytic activity">
    <reaction evidence="1">
        <text>L-threonyl-[protein] + ATP = O-phospho-L-threonyl-[protein] + ADP + H(+)</text>
        <dbReference type="Rhea" id="RHEA:46608"/>
        <dbReference type="Rhea" id="RHEA-COMP:11060"/>
        <dbReference type="Rhea" id="RHEA-COMP:11605"/>
        <dbReference type="ChEBI" id="CHEBI:15378"/>
        <dbReference type="ChEBI" id="CHEBI:30013"/>
        <dbReference type="ChEBI" id="CHEBI:30616"/>
        <dbReference type="ChEBI" id="CHEBI:61977"/>
        <dbReference type="ChEBI" id="CHEBI:456216"/>
        <dbReference type="EC" id="2.7.11.22"/>
    </reaction>
</comment>
<comment type="catalytic activity">
    <reaction evidence="2">
        <text>[DNA-directed RNA polymerase] + ATP = phospho-[DNA-directed RNA polymerase] + ADP + H(+)</text>
        <dbReference type="Rhea" id="RHEA:10216"/>
        <dbReference type="Rhea" id="RHEA-COMP:11321"/>
        <dbReference type="Rhea" id="RHEA-COMP:11322"/>
        <dbReference type="ChEBI" id="CHEBI:15378"/>
        <dbReference type="ChEBI" id="CHEBI:30616"/>
        <dbReference type="ChEBI" id="CHEBI:43176"/>
        <dbReference type="ChEBI" id="CHEBI:68546"/>
        <dbReference type="ChEBI" id="CHEBI:456216"/>
        <dbReference type="EC" id="2.7.11.23"/>
    </reaction>
</comment>
<comment type="activity regulation">
    <text evidence="1">Phosphorylation at Thr-14 or Tyr-15 inactivates the enzyme, while phosphorylation at Thr-161 activates it. Activated through a multistep process; binding to cyclin-B is required for relocation of cyclin-kinase complexes to the nucleus, activated by CAK/CDK7-mediated phosphorylation on Thr-161, and CDC25-mediated dephosphorylation of inhibitory phosphorylation on Thr-14 and Tyr-15. Activity is restricted during S-phase in an ATR-dependent manner to prevent premature entry into G2. Repressed by the CDK inhibitors CDKN1A/p21 and CDKN1B/p27 during the G1 phase and by CDKN1A/p21 at the G1-S checkpoint upon DNA damage. Transient activation by rapid and transient dephosphorylation at Tyr-15 triggered by TGFB1.</text>
</comment>
<comment type="subunit">
    <text evidence="1 2 5 7">Forms a stable but non-covalent complex with a regulatory subunit and with a cyclin. Interacts with cyclins-B (CCNB1, CCNB2 and CCNB3) to form a serine/threonine kinase holoenzyme complex also known as maturation promoting factor (MPF). The cyclin subunit imparts substrate specificity to the complex. Can also form CDK1-cylin-D and CDK1-cyclin-E complexes that phosphorylate RB1 in vitro. Binds to RB1 and other transcription factors such as FOXO1 and RUNX2. Promotes G2-M transition when in complex with a cyclin-B. Interacts with DLGAP5. Binds to the CDK inhibitors CDKN1A/p21 and CDKN1B/p27. Isoform 2 is unable to complex with cyclin-B1 and also fails to bind to CDKN1A/p21. Interacts with catalytically active CCNB1 and RALBP1 during mitosis to form an endocytotic complex during interphase. Associates with cyclins-A and B1 during S-phase in regenerating hepatocytes. Interacts with FANCC. Interacts with CEP63; this interaction recruits CDK1 to centrosomes. Interacts with CENPA. Interacts with NR1D1 (By similarity). Interacts with proteasome subunit PSMA8; to participate in meiosis progression during spermatogenesis (By similarity).</text>
</comment>
<comment type="subcellular location">
    <subcellularLocation>
        <location evidence="7 8">Nucleus</location>
    </subcellularLocation>
    <subcellularLocation>
        <location evidence="2">Cytoplasm</location>
    </subcellularLocation>
    <subcellularLocation>
        <location evidence="2">Mitochondrion</location>
    </subcellularLocation>
    <subcellularLocation>
        <location evidence="1">Cytoplasm</location>
        <location evidence="1">Cytoskeleton</location>
        <location evidence="1">Microtubule organizing center</location>
        <location evidence="1">Centrosome</location>
    </subcellularLocation>
    <subcellularLocation>
        <location evidence="1">Cytoplasm</location>
        <location evidence="1">Cytoskeleton</location>
        <location evidence="1">Spindle</location>
    </subcellularLocation>
    <text evidence="1">Colocalizes with SIRT2 on centrosome during prophase and on splindle fibers during metaphase of the mitotic cell cycle (By similarity). Cytoplasmic during the interphase. Reversibly translocated from cytoplasm to nucleus when phosphorylated before G2-M transition when associated with cyclin-B1. Accumulates in mitochondria in G2-arrested cells upon DNA-damage.</text>
</comment>
<comment type="induction">
    <text evidence="5 7">Follow a cyclic expression; during interphase, accumulates gradually following G1, S to reach a critical threshold at the end of G2, which promotes self-activation and triggers onset of mitosis. Induced transiently by TGFB1 at an early phase of TGFB1-mediated apoptosis. Expressed during S-phase in mitogen-stimulated hepatocytes.</text>
</comment>
<comment type="PTM">
    <text evidence="1">Phosphorylation at Thr-161 by CAK/CDK7 activates kinase activity. Phosphorylation at Thr-14 and Tyr-15 by PKMYT1 prevents nuclear translocation. Phosphorylation at Tyr-15 by WEE1 and WEE2 inhibits the protein kinase activity and acts as a negative regulator of entry into mitosis (G2 to M transition). Phosphorylation by PKMYT1 and WEE1 takes place during mitosis to keep CDK1-cyclin-B complexes inactive until the end of G2. By the end of G2, PKMYT1 and WEE1 are inactivated, but CDC25A and CDC25B are activated. Dephosphorylation by active CDC25A and CDC25B at Thr-14 and Tyr-15, leads to CDK1 activation at the G2-M transition. Phosphorylation at Tyr-15 by WEE2 during oogenesis is required to maintain meiotic arrest in oocytes during the germinal vesicle (GV) stage, a long period of quiescence at dictyate prophase I, leading to prevent meiotic reentry. Phosphorylation by WEE2 is also required for metaphase II exit during egg activation to ensure exit from meiosis in oocytes and promote pronuclear formation. Phosphorylated at Tyr-4 by PKR/EIF2AK2 upon genotoxic stress. This phosphorylation triggers CDK1 polyubiquitination and subsequent proteolysis, thus leading to G2 arrest. In response to UV irradiation, phosphorylation at Tyr-15 by PRKCD activates the G2/M DNA damage checkpoint (By similarity).</text>
</comment>
<comment type="PTM">
    <text evidence="1">Polyubiquitinated upon genotoxic stress.</text>
</comment>
<comment type="similarity">
    <text evidence="9">Belongs to the protein kinase superfamily. CMGC Ser/Thr protein kinase family. CDC2/CDKX subfamily.</text>
</comment>